<reference key="1">
    <citation type="journal article" date="2009" name="J. Bacteriol.">
        <title>Role of conjugative elements in the evolution of the multidrug-resistant pandemic clone Streptococcus pneumoniae Spain23F ST81.</title>
        <authorList>
            <person name="Croucher N.J."/>
            <person name="Walker D."/>
            <person name="Romero P."/>
            <person name="Lennard N."/>
            <person name="Paterson G.K."/>
            <person name="Bason N.C."/>
            <person name="Mitchell A.M."/>
            <person name="Quail M.A."/>
            <person name="Andrew P.W."/>
            <person name="Parkhill J."/>
            <person name="Bentley S.D."/>
            <person name="Mitchell T.J."/>
        </authorList>
    </citation>
    <scope>NUCLEOTIDE SEQUENCE [LARGE SCALE GENOMIC DNA]</scope>
    <source>
        <strain>ATCC 700669 / Spain 23F-1</strain>
    </source>
</reference>
<dbReference type="EC" id="4.2.1.11" evidence="1"/>
<dbReference type="EMBL" id="FM211187">
    <property type="protein sequence ID" value="CAR68867.1"/>
    <property type="molecule type" value="Genomic_DNA"/>
</dbReference>
<dbReference type="RefSeq" id="WP_000022813.1">
    <property type="nucleotide sequence ID" value="NC_011900.1"/>
</dbReference>
<dbReference type="SMR" id="B8ZPW9"/>
<dbReference type="GeneID" id="93739591"/>
<dbReference type="KEGG" id="sne:SPN23F10490"/>
<dbReference type="HOGENOM" id="CLU_031223_2_1_9"/>
<dbReference type="UniPathway" id="UPA00109">
    <property type="reaction ID" value="UER00187"/>
</dbReference>
<dbReference type="GO" id="GO:0009986">
    <property type="term" value="C:cell surface"/>
    <property type="evidence" value="ECO:0007669"/>
    <property type="project" value="UniProtKB-SubCell"/>
</dbReference>
<dbReference type="GO" id="GO:0005576">
    <property type="term" value="C:extracellular region"/>
    <property type="evidence" value="ECO:0007669"/>
    <property type="project" value="UniProtKB-SubCell"/>
</dbReference>
<dbReference type="GO" id="GO:0009274">
    <property type="term" value="C:peptidoglycan-based cell wall"/>
    <property type="evidence" value="ECO:0007669"/>
    <property type="project" value="UniProtKB-ARBA"/>
</dbReference>
<dbReference type="GO" id="GO:0000015">
    <property type="term" value="C:phosphopyruvate hydratase complex"/>
    <property type="evidence" value="ECO:0007669"/>
    <property type="project" value="InterPro"/>
</dbReference>
<dbReference type="GO" id="GO:0000287">
    <property type="term" value="F:magnesium ion binding"/>
    <property type="evidence" value="ECO:0007669"/>
    <property type="project" value="UniProtKB-UniRule"/>
</dbReference>
<dbReference type="GO" id="GO:0004634">
    <property type="term" value="F:phosphopyruvate hydratase activity"/>
    <property type="evidence" value="ECO:0007669"/>
    <property type="project" value="UniProtKB-UniRule"/>
</dbReference>
<dbReference type="GO" id="GO:0006096">
    <property type="term" value="P:glycolytic process"/>
    <property type="evidence" value="ECO:0007669"/>
    <property type="project" value="UniProtKB-UniRule"/>
</dbReference>
<dbReference type="CDD" id="cd03313">
    <property type="entry name" value="enolase"/>
    <property type="match status" value="1"/>
</dbReference>
<dbReference type="FunFam" id="3.20.20.120:FF:000001">
    <property type="entry name" value="Enolase"/>
    <property type="match status" value="1"/>
</dbReference>
<dbReference type="FunFam" id="3.30.390.10:FF:000001">
    <property type="entry name" value="Enolase"/>
    <property type="match status" value="1"/>
</dbReference>
<dbReference type="Gene3D" id="3.20.20.120">
    <property type="entry name" value="Enolase-like C-terminal domain"/>
    <property type="match status" value="1"/>
</dbReference>
<dbReference type="Gene3D" id="3.30.390.10">
    <property type="entry name" value="Enolase-like, N-terminal domain"/>
    <property type="match status" value="1"/>
</dbReference>
<dbReference type="HAMAP" id="MF_00318">
    <property type="entry name" value="Enolase"/>
    <property type="match status" value="1"/>
</dbReference>
<dbReference type="InterPro" id="IPR000941">
    <property type="entry name" value="Enolase"/>
</dbReference>
<dbReference type="InterPro" id="IPR036849">
    <property type="entry name" value="Enolase-like_C_sf"/>
</dbReference>
<dbReference type="InterPro" id="IPR029017">
    <property type="entry name" value="Enolase-like_N"/>
</dbReference>
<dbReference type="InterPro" id="IPR020810">
    <property type="entry name" value="Enolase_C"/>
</dbReference>
<dbReference type="InterPro" id="IPR020809">
    <property type="entry name" value="Enolase_CS"/>
</dbReference>
<dbReference type="InterPro" id="IPR020811">
    <property type="entry name" value="Enolase_N"/>
</dbReference>
<dbReference type="NCBIfam" id="TIGR01060">
    <property type="entry name" value="eno"/>
    <property type="match status" value="1"/>
</dbReference>
<dbReference type="PANTHER" id="PTHR11902">
    <property type="entry name" value="ENOLASE"/>
    <property type="match status" value="1"/>
</dbReference>
<dbReference type="PANTHER" id="PTHR11902:SF1">
    <property type="entry name" value="ENOLASE"/>
    <property type="match status" value="1"/>
</dbReference>
<dbReference type="Pfam" id="PF00113">
    <property type="entry name" value="Enolase_C"/>
    <property type="match status" value="1"/>
</dbReference>
<dbReference type="Pfam" id="PF03952">
    <property type="entry name" value="Enolase_N"/>
    <property type="match status" value="1"/>
</dbReference>
<dbReference type="PIRSF" id="PIRSF001400">
    <property type="entry name" value="Enolase"/>
    <property type="match status" value="1"/>
</dbReference>
<dbReference type="PRINTS" id="PR00148">
    <property type="entry name" value="ENOLASE"/>
</dbReference>
<dbReference type="SFLD" id="SFLDS00001">
    <property type="entry name" value="Enolase"/>
    <property type="match status" value="1"/>
</dbReference>
<dbReference type="SFLD" id="SFLDF00002">
    <property type="entry name" value="enolase"/>
    <property type="match status" value="1"/>
</dbReference>
<dbReference type="SMART" id="SM01192">
    <property type="entry name" value="Enolase_C"/>
    <property type="match status" value="1"/>
</dbReference>
<dbReference type="SMART" id="SM01193">
    <property type="entry name" value="Enolase_N"/>
    <property type="match status" value="1"/>
</dbReference>
<dbReference type="SUPFAM" id="SSF51604">
    <property type="entry name" value="Enolase C-terminal domain-like"/>
    <property type="match status" value="1"/>
</dbReference>
<dbReference type="SUPFAM" id="SSF54826">
    <property type="entry name" value="Enolase N-terminal domain-like"/>
    <property type="match status" value="1"/>
</dbReference>
<dbReference type="PROSITE" id="PS00164">
    <property type="entry name" value="ENOLASE"/>
    <property type="match status" value="1"/>
</dbReference>
<organism>
    <name type="scientific">Streptococcus pneumoniae (strain ATCC 700669 / Spain 23F-1)</name>
    <dbReference type="NCBI Taxonomy" id="561276"/>
    <lineage>
        <taxon>Bacteria</taxon>
        <taxon>Bacillati</taxon>
        <taxon>Bacillota</taxon>
        <taxon>Bacilli</taxon>
        <taxon>Lactobacillales</taxon>
        <taxon>Streptococcaceae</taxon>
        <taxon>Streptococcus</taxon>
    </lineage>
</organism>
<sequence length="434" mass="47103">MSIITDVYAREVLDSRGNPTLEVEVYTESGAFGRGMVPSGASTGEHEAVELRDGDKSRYGGLGTQKAVDNVNNIIAEAIIGYDVRDQQAIDRAMIALDGTPNKGKLGANAILGVSIAVARAAADYLEIPLYSYLGGFNTKVLPTPMMNIINGGSHSDAPIAFQEFMILPVGAPTFKEALRYGAEIFHALKKILKSRGLETAVGDEGGFAPRFEGTEDGVETILAAIEAAGYVPGKDVFIGFDCASSEFYDKERKVYDYTKFEGEGAAVRTSAEQIDYLEELVNKYPIITIEDGMDENDWDGWKALTERLGKKVQLVGDDFFVTNTDYLARGIQEGAANSILIKVNQIGTLTETFEAIEMAKEAGYTAVVSHRSGETEDSTIADIAVATNAGQIKTGSLSRTDRIAKYNQLLRIEDQLGEVAEYRGLKSFYNLKK</sequence>
<keyword id="KW-0963">Cytoplasm</keyword>
<keyword id="KW-0324">Glycolysis</keyword>
<keyword id="KW-0456">Lyase</keyword>
<keyword id="KW-0460">Magnesium</keyword>
<keyword id="KW-0479">Metal-binding</keyword>
<keyword id="KW-0964">Secreted</keyword>
<evidence type="ECO:0000255" key="1">
    <source>
        <dbReference type="HAMAP-Rule" id="MF_00318"/>
    </source>
</evidence>
<feature type="chain" id="PRO_1000133023" description="Enolase">
    <location>
        <begin position="1"/>
        <end position="434"/>
    </location>
</feature>
<feature type="active site" description="Proton donor" evidence="1">
    <location>
        <position position="205"/>
    </location>
</feature>
<feature type="active site" description="Proton acceptor" evidence="1">
    <location>
        <position position="343"/>
    </location>
</feature>
<feature type="binding site" evidence="1">
    <location>
        <position position="163"/>
    </location>
    <ligand>
        <name>(2R)-2-phosphoglycerate</name>
        <dbReference type="ChEBI" id="CHEBI:58289"/>
    </ligand>
</feature>
<feature type="binding site" evidence="1">
    <location>
        <position position="242"/>
    </location>
    <ligand>
        <name>Mg(2+)</name>
        <dbReference type="ChEBI" id="CHEBI:18420"/>
    </ligand>
</feature>
<feature type="binding site" evidence="1">
    <location>
        <position position="291"/>
    </location>
    <ligand>
        <name>Mg(2+)</name>
        <dbReference type="ChEBI" id="CHEBI:18420"/>
    </ligand>
</feature>
<feature type="binding site" evidence="1">
    <location>
        <position position="318"/>
    </location>
    <ligand>
        <name>Mg(2+)</name>
        <dbReference type="ChEBI" id="CHEBI:18420"/>
    </ligand>
</feature>
<feature type="binding site" evidence="1">
    <location>
        <position position="343"/>
    </location>
    <ligand>
        <name>(2R)-2-phosphoglycerate</name>
        <dbReference type="ChEBI" id="CHEBI:58289"/>
    </ligand>
</feature>
<feature type="binding site" evidence="1">
    <location>
        <position position="372"/>
    </location>
    <ligand>
        <name>(2R)-2-phosphoglycerate</name>
        <dbReference type="ChEBI" id="CHEBI:58289"/>
    </ligand>
</feature>
<feature type="binding site" evidence="1">
    <location>
        <position position="373"/>
    </location>
    <ligand>
        <name>(2R)-2-phosphoglycerate</name>
        <dbReference type="ChEBI" id="CHEBI:58289"/>
    </ligand>
</feature>
<feature type="binding site" evidence="1">
    <location>
        <position position="394"/>
    </location>
    <ligand>
        <name>(2R)-2-phosphoglycerate</name>
        <dbReference type="ChEBI" id="CHEBI:58289"/>
    </ligand>
</feature>
<comment type="function">
    <text evidence="1">Catalyzes the reversible conversion of 2-phosphoglycerate (2-PG) into phosphoenolpyruvate (PEP). It is essential for the degradation of carbohydrates via glycolysis.</text>
</comment>
<comment type="catalytic activity">
    <reaction evidence="1">
        <text>(2R)-2-phosphoglycerate = phosphoenolpyruvate + H2O</text>
        <dbReference type="Rhea" id="RHEA:10164"/>
        <dbReference type="ChEBI" id="CHEBI:15377"/>
        <dbReference type="ChEBI" id="CHEBI:58289"/>
        <dbReference type="ChEBI" id="CHEBI:58702"/>
        <dbReference type="EC" id="4.2.1.11"/>
    </reaction>
</comment>
<comment type="cofactor">
    <cofactor evidence="1">
        <name>Mg(2+)</name>
        <dbReference type="ChEBI" id="CHEBI:18420"/>
    </cofactor>
    <text evidence="1">Binds a second Mg(2+) ion via substrate during catalysis.</text>
</comment>
<comment type="pathway">
    <text evidence="1">Carbohydrate degradation; glycolysis; pyruvate from D-glyceraldehyde 3-phosphate: step 4/5.</text>
</comment>
<comment type="subcellular location">
    <subcellularLocation>
        <location evidence="1">Cytoplasm</location>
    </subcellularLocation>
    <subcellularLocation>
        <location evidence="1">Secreted</location>
    </subcellularLocation>
    <subcellularLocation>
        <location evidence="1">Cell surface</location>
    </subcellularLocation>
    <text evidence="1">Fractions of enolase are present in both the cytoplasm and on the cell surface.</text>
</comment>
<comment type="similarity">
    <text evidence="1">Belongs to the enolase family.</text>
</comment>
<protein>
    <recommendedName>
        <fullName evidence="1">Enolase</fullName>
        <ecNumber evidence="1">4.2.1.11</ecNumber>
    </recommendedName>
    <alternativeName>
        <fullName evidence="1">2-phospho-D-glycerate hydro-lyase</fullName>
    </alternativeName>
    <alternativeName>
        <fullName evidence="1">2-phosphoglycerate dehydratase</fullName>
    </alternativeName>
</protein>
<gene>
    <name evidence="1" type="primary">eno</name>
    <name type="ordered locus">SPN23F10490</name>
</gene>
<accession>B8ZPW9</accession>
<name>ENO_STRPJ</name>
<proteinExistence type="inferred from homology"/>